<keyword id="KW-0053">Apoptosis</keyword>
<keyword id="KW-0963">Cytoplasm</keyword>
<keyword id="KW-0968">Cytoplasmic vesicle</keyword>
<keyword id="KW-0539">Nucleus</keyword>
<keyword id="KW-1185">Reference proteome</keyword>
<keyword id="KW-0677">Repeat</keyword>
<reference key="1">
    <citation type="journal article" date="2004" name="Nature">
        <title>Genome sequence of the Brown Norway rat yields insights into mammalian evolution.</title>
        <authorList>
            <person name="Gibbs R.A."/>
            <person name="Weinstock G.M."/>
            <person name="Metzker M.L."/>
            <person name="Muzny D.M."/>
            <person name="Sodergren E.J."/>
            <person name="Scherer S."/>
            <person name="Scott G."/>
            <person name="Steffen D."/>
            <person name="Worley K.C."/>
            <person name="Burch P.E."/>
            <person name="Okwuonu G."/>
            <person name="Hines S."/>
            <person name="Lewis L."/>
            <person name="Deramo C."/>
            <person name="Delgado O."/>
            <person name="Dugan-Rocha S."/>
            <person name="Miner G."/>
            <person name="Morgan M."/>
            <person name="Hawes A."/>
            <person name="Gill R."/>
            <person name="Holt R.A."/>
            <person name="Adams M.D."/>
            <person name="Amanatides P.G."/>
            <person name="Baden-Tillson H."/>
            <person name="Barnstead M."/>
            <person name="Chin S."/>
            <person name="Evans C.A."/>
            <person name="Ferriera S."/>
            <person name="Fosler C."/>
            <person name="Glodek A."/>
            <person name="Gu Z."/>
            <person name="Jennings D."/>
            <person name="Kraft C.L."/>
            <person name="Nguyen T."/>
            <person name="Pfannkoch C.M."/>
            <person name="Sitter C."/>
            <person name="Sutton G.G."/>
            <person name="Venter J.C."/>
            <person name="Woodage T."/>
            <person name="Smith D."/>
            <person name="Lee H.-M."/>
            <person name="Gustafson E."/>
            <person name="Cahill P."/>
            <person name="Kana A."/>
            <person name="Doucette-Stamm L."/>
            <person name="Weinstock K."/>
            <person name="Fechtel K."/>
            <person name="Weiss R.B."/>
            <person name="Dunn D.M."/>
            <person name="Green E.D."/>
            <person name="Blakesley R.W."/>
            <person name="Bouffard G.G."/>
            <person name="De Jong P.J."/>
            <person name="Osoegawa K."/>
            <person name="Zhu B."/>
            <person name="Marra M."/>
            <person name="Schein J."/>
            <person name="Bosdet I."/>
            <person name="Fjell C."/>
            <person name="Jones S."/>
            <person name="Krzywinski M."/>
            <person name="Mathewson C."/>
            <person name="Siddiqui A."/>
            <person name="Wye N."/>
            <person name="McPherson J."/>
            <person name="Zhao S."/>
            <person name="Fraser C.M."/>
            <person name="Shetty J."/>
            <person name="Shatsman S."/>
            <person name="Geer K."/>
            <person name="Chen Y."/>
            <person name="Abramzon S."/>
            <person name="Nierman W.C."/>
            <person name="Havlak P.H."/>
            <person name="Chen R."/>
            <person name="Durbin K.J."/>
            <person name="Egan A."/>
            <person name="Ren Y."/>
            <person name="Song X.-Z."/>
            <person name="Li B."/>
            <person name="Liu Y."/>
            <person name="Qin X."/>
            <person name="Cawley S."/>
            <person name="Cooney A.J."/>
            <person name="D'Souza L.M."/>
            <person name="Martin K."/>
            <person name="Wu J.Q."/>
            <person name="Gonzalez-Garay M.L."/>
            <person name="Jackson A.R."/>
            <person name="Kalafus K.J."/>
            <person name="McLeod M.P."/>
            <person name="Milosavljevic A."/>
            <person name="Virk D."/>
            <person name="Volkov A."/>
            <person name="Wheeler D.A."/>
            <person name="Zhang Z."/>
            <person name="Bailey J.A."/>
            <person name="Eichler E.E."/>
            <person name="Tuzun E."/>
            <person name="Birney E."/>
            <person name="Mongin E."/>
            <person name="Ureta-Vidal A."/>
            <person name="Woodwark C."/>
            <person name="Zdobnov E."/>
            <person name="Bork P."/>
            <person name="Suyama M."/>
            <person name="Torrents D."/>
            <person name="Alexandersson M."/>
            <person name="Trask B.J."/>
            <person name="Young J.M."/>
            <person name="Huang H."/>
            <person name="Wang H."/>
            <person name="Xing H."/>
            <person name="Daniels S."/>
            <person name="Gietzen D."/>
            <person name="Schmidt J."/>
            <person name="Stevens K."/>
            <person name="Vitt U."/>
            <person name="Wingrove J."/>
            <person name="Camara F."/>
            <person name="Mar Alba M."/>
            <person name="Abril J.F."/>
            <person name="Guigo R."/>
            <person name="Smit A."/>
            <person name="Dubchak I."/>
            <person name="Rubin E.M."/>
            <person name="Couronne O."/>
            <person name="Poliakov A."/>
            <person name="Huebner N."/>
            <person name="Ganten D."/>
            <person name="Goesele C."/>
            <person name="Hummel O."/>
            <person name="Kreitler T."/>
            <person name="Lee Y.-A."/>
            <person name="Monti J."/>
            <person name="Schulz H."/>
            <person name="Zimdahl H."/>
            <person name="Himmelbauer H."/>
            <person name="Lehrach H."/>
            <person name="Jacob H.J."/>
            <person name="Bromberg S."/>
            <person name="Gullings-Handley J."/>
            <person name="Jensen-Seaman M.I."/>
            <person name="Kwitek A.E."/>
            <person name="Lazar J."/>
            <person name="Pasko D."/>
            <person name="Tonellato P.J."/>
            <person name="Twigger S."/>
            <person name="Ponting C.P."/>
            <person name="Duarte J.M."/>
            <person name="Rice S."/>
            <person name="Goodstadt L."/>
            <person name="Beatson S.A."/>
            <person name="Emes R.D."/>
            <person name="Winter E.E."/>
            <person name="Webber C."/>
            <person name="Brandt P."/>
            <person name="Nyakatura G."/>
            <person name="Adetobi M."/>
            <person name="Chiaromonte F."/>
            <person name="Elnitski L."/>
            <person name="Eswara P."/>
            <person name="Hardison R.C."/>
            <person name="Hou M."/>
            <person name="Kolbe D."/>
            <person name="Makova K."/>
            <person name="Miller W."/>
            <person name="Nekrutenko A."/>
            <person name="Riemer C."/>
            <person name="Schwartz S."/>
            <person name="Taylor J."/>
            <person name="Yang S."/>
            <person name="Zhang Y."/>
            <person name="Lindpaintner K."/>
            <person name="Andrews T.D."/>
            <person name="Caccamo M."/>
            <person name="Clamp M."/>
            <person name="Clarke L."/>
            <person name="Curwen V."/>
            <person name="Durbin R.M."/>
            <person name="Eyras E."/>
            <person name="Searle S.M."/>
            <person name="Cooper G.M."/>
            <person name="Batzoglou S."/>
            <person name="Brudno M."/>
            <person name="Sidow A."/>
            <person name="Stone E.A."/>
            <person name="Payseur B.A."/>
            <person name="Bourque G."/>
            <person name="Lopez-Otin C."/>
            <person name="Puente X.S."/>
            <person name="Chakrabarti K."/>
            <person name="Chatterji S."/>
            <person name="Dewey C."/>
            <person name="Pachter L."/>
            <person name="Bray N."/>
            <person name="Yap V.B."/>
            <person name="Caspi A."/>
            <person name="Tesler G."/>
            <person name="Pevzner P.A."/>
            <person name="Haussler D."/>
            <person name="Roskin K.M."/>
            <person name="Baertsch R."/>
            <person name="Clawson H."/>
            <person name="Furey T.S."/>
            <person name="Hinrichs A.S."/>
            <person name="Karolchik D."/>
            <person name="Kent W.J."/>
            <person name="Rosenbloom K.R."/>
            <person name="Trumbower H."/>
            <person name="Weirauch M."/>
            <person name="Cooper D.N."/>
            <person name="Stenson P.D."/>
            <person name="Ma B."/>
            <person name="Brent M."/>
            <person name="Arumugam M."/>
            <person name="Shteynberg D."/>
            <person name="Copley R.R."/>
            <person name="Taylor M.S."/>
            <person name="Riethman H."/>
            <person name="Mudunuri U."/>
            <person name="Peterson J."/>
            <person name="Guyer M."/>
            <person name="Felsenfeld A."/>
            <person name="Old S."/>
            <person name="Mockrin S."/>
            <person name="Collins F.S."/>
        </authorList>
    </citation>
    <scope>NUCLEOTIDE SEQUENCE [LARGE SCALE GENOMIC DNA]</scope>
    <source>
        <strain>Brown Norway</strain>
    </source>
</reference>
<reference key="2">
    <citation type="journal article" date="1999" name="J. Neurochem.">
        <title>A proline- and glutamine-rich protein promotes apoptosis in neuronal cells.</title>
        <authorList>
            <person name="Gomes I."/>
            <person name="Xiong W."/>
            <person name="Miki T."/>
            <person name="Rosner M.R."/>
        </authorList>
    </citation>
    <scope>NUCLEOTIDE SEQUENCE [MRNA] OF 8-407</scope>
    <scope>FUNCTION</scope>
    <scope>DEVELOPMENTAL STAGE</scope>
    <scope>INDUCTION</scope>
</reference>
<sequence>MRRTPAAERLSELGFPPRRGSQEPPFPLGVTRGWGGWPIEKRCEGPRPVPFSERSAEDGREQPAHGSGILWRVRTRLSLCRDPEPPPPPPPLCLLRVSLLCALRAGGRGSRWSEDSARLLLLPPAGASGSLKAERSSSTPYAGRMLESSGCKALKEGVLEKRSDGLLQLWKKKCCILTEEGLLLIPPKQVQHQQQQQQQQQPGQGTAEPSQPSGPAVTSLEPPAKLKELHFSNMKTVDCVERKGKYMYFTVVMAEGKEIDFRCPQDQGWNAEITLQMVQYKNRQAILAVKSTRQKQQHLVQQQPPQTQQIQPQPQQPQIQPQPQPQIQPQPQPQPQPQPQPQQQPQPQQLHSYPHPHPHLYPHPHPHAHSHPHPHPHPHPHQLQHAHQPLHSQPQGHRLLRSTSNSA</sequence>
<accession>Q9QZA1</accession>
<protein>
    <recommendedName>
        <fullName>Pleckstrin homology-like domain family A member 1</fullName>
    </recommendedName>
    <alternativeName>
        <fullName>Proline- and glutamine-rich protein</fullName>
        <shortName>PQ-rich protein</shortName>
        <shortName>PQR protein</shortName>
    </alternativeName>
</protein>
<evidence type="ECO:0000250" key="1"/>
<evidence type="ECO:0000250" key="2">
    <source>
        <dbReference type="UniProtKB" id="Q8WV24"/>
    </source>
</evidence>
<evidence type="ECO:0000256" key="3">
    <source>
        <dbReference type="SAM" id="MobiDB-lite"/>
    </source>
</evidence>
<evidence type="ECO:0000269" key="4">
    <source>
    </source>
</evidence>
<gene>
    <name type="primary">Phlda1</name>
    <name type="synonym">Pqr</name>
</gene>
<feature type="chain" id="PRO_0000053899" description="Pleckstrin homology-like domain family A member 1">
    <location>
        <begin position="1"/>
        <end position="407"/>
    </location>
</feature>
<feature type="domain" description="PH">
    <location>
        <begin position="149"/>
        <end position="184"/>
    </location>
</feature>
<feature type="region of interest" description="Disordered" evidence="3">
    <location>
        <begin position="1"/>
        <end position="67"/>
    </location>
</feature>
<feature type="region of interest" description="Disordered" evidence="3">
    <location>
        <begin position="188"/>
        <end position="224"/>
    </location>
</feature>
<feature type="region of interest" description="Disordered" evidence="3">
    <location>
        <begin position="296"/>
        <end position="407"/>
    </location>
</feature>
<feature type="region of interest" description="15 X 2 AA repeats of P-Q">
    <location>
        <begin position="312"/>
        <end position="348"/>
    </location>
</feature>
<feature type="region of interest" description="11 X 2 AA repeats of P-H">
    <location>
        <begin position="354"/>
        <end position="381"/>
    </location>
</feature>
<feature type="compositionally biased region" description="Basic and acidic residues" evidence="3">
    <location>
        <begin position="1"/>
        <end position="11"/>
    </location>
</feature>
<feature type="compositionally biased region" description="Basic and acidic residues" evidence="3">
    <location>
        <begin position="54"/>
        <end position="63"/>
    </location>
</feature>
<feature type="compositionally biased region" description="Low complexity" evidence="3">
    <location>
        <begin position="189"/>
        <end position="204"/>
    </location>
</feature>
<feature type="compositionally biased region" description="Low complexity" evidence="3">
    <location>
        <begin position="297"/>
        <end position="319"/>
    </location>
</feature>
<feature type="compositionally biased region" description="Pro residues" evidence="3">
    <location>
        <begin position="320"/>
        <end position="344"/>
    </location>
</feature>
<feature type="compositionally biased region" description="Basic residues" evidence="3">
    <location>
        <begin position="354"/>
        <end position="384"/>
    </location>
</feature>
<feature type="compositionally biased region" description="Low complexity" evidence="3">
    <location>
        <begin position="385"/>
        <end position="395"/>
    </location>
</feature>
<organism>
    <name type="scientific">Rattus norvegicus</name>
    <name type="common">Rat</name>
    <dbReference type="NCBI Taxonomy" id="10116"/>
    <lineage>
        <taxon>Eukaryota</taxon>
        <taxon>Metazoa</taxon>
        <taxon>Chordata</taxon>
        <taxon>Craniata</taxon>
        <taxon>Vertebrata</taxon>
        <taxon>Euteleostomi</taxon>
        <taxon>Mammalia</taxon>
        <taxon>Eutheria</taxon>
        <taxon>Euarchontoglires</taxon>
        <taxon>Glires</taxon>
        <taxon>Rodentia</taxon>
        <taxon>Myomorpha</taxon>
        <taxon>Muroidea</taxon>
        <taxon>Muridae</taxon>
        <taxon>Murinae</taxon>
        <taxon>Rattus</taxon>
    </lineage>
</organism>
<proteinExistence type="evidence at transcript level"/>
<comment type="function">
    <text evidence="4">Seems to be involved in regulation of apoptosis. May be involved in detachment-mediated programmed cell death. May mediate apoptosis during neuronal development. May be involved in regulation of anti-apoptotic effects of IGF1. May be involved in translational regulation.</text>
</comment>
<comment type="subunit">
    <text evidence="1">Interacts with RPL14, EIF3S7 and PABPC4.</text>
</comment>
<comment type="subcellular location">
    <subcellularLocation>
        <location evidence="2">Cytoplasm</location>
    </subcellularLocation>
    <subcellularLocation>
        <location evidence="2">Cytoplasmic vesicle</location>
    </subcellularLocation>
    <subcellularLocation>
        <location evidence="2">Nucleus</location>
        <location evidence="2">Nucleolus</location>
    </subcellularLocation>
    <text evidence="2">Colocalizes with intracellular vesicles.</text>
</comment>
<comment type="developmental stage">
    <text evidence="4">Expression increases during embryonal development at 11 dpc, 15 dpc and 17 dpc.</text>
</comment>
<comment type="induction">
    <text evidence="4">Induced by FGF in a hippocampal progenitor cell line. Induced by FGF and EGF in a CNS neuronal cell line.</text>
</comment>
<name>PHLA1_RAT</name>
<dbReference type="EMBL" id="AABR03055997">
    <property type="status" value="NOT_ANNOTATED_CDS"/>
    <property type="molecule type" value="Genomic_DNA"/>
</dbReference>
<dbReference type="EMBL" id="AF192802">
    <property type="protein sequence ID" value="AAF07181.1"/>
    <property type="molecule type" value="mRNA"/>
</dbReference>
<dbReference type="FunCoup" id="Q9QZA1">
    <property type="interactions" value="99"/>
</dbReference>
<dbReference type="STRING" id="10116.ENSRNOP00000005361"/>
<dbReference type="PhosphoSitePlus" id="Q9QZA1"/>
<dbReference type="PaxDb" id="10116-ENSRNOP00000005361"/>
<dbReference type="UCSC" id="RGD:3836">
    <property type="organism name" value="rat"/>
</dbReference>
<dbReference type="AGR" id="RGD:3836"/>
<dbReference type="RGD" id="3836">
    <property type="gene designation" value="Phlda1"/>
</dbReference>
<dbReference type="eggNOG" id="ENOG502RZ5Q">
    <property type="taxonomic scope" value="Eukaryota"/>
</dbReference>
<dbReference type="InParanoid" id="Q9QZA1"/>
<dbReference type="PhylomeDB" id="Q9QZA1"/>
<dbReference type="Reactome" id="R-RNO-8854521">
    <property type="pathway name" value="Interaction between PHLDA1 and AURKA"/>
</dbReference>
<dbReference type="PRO" id="PR:Q9QZA1"/>
<dbReference type="Proteomes" id="UP000002494">
    <property type="component" value="Unplaced"/>
</dbReference>
<dbReference type="GO" id="GO:0031410">
    <property type="term" value="C:cytoplasmic vesicle"/>
    <property type="evidence" value="ECO:0007669"/>
    <property type="project" value="UniProtKB-KW"/>
</dbReference>
<dbReference type="GO" id="GO:0005730">
    <property type="term" value="C:nucleolus"/>
    <property type="evidence" value="ECO:0007669"/>
    <property type="project" value="UniProtKB-SubCell"/>
</dbReference>
<dbReference type="GO" id="GO:0005634">
    <property type="term" value="C:nucleus"/>
    <property type="evidence" value="ECO:0000318"/>
    <property type="project" value="GO_Central"/>
</dbReference>
<dbReference type="GO" id="GO:1901981">
    <property type="term" value="F:phosphatidylinositol phosphate binding"/>
    <property type="evidence" value="ECO:0007669"/>
    <property type="project" value="InterPro"/>
</dbReference>
<dbReference type="GO" id="GO:0006915">
    <property type="term" value="P:apoptotic process"/>
    <property type="evidence" value="ECO:0007669"/>
    <property type="project" value="UniProtKB-KW"/>
</dbReference>
<dbReference type="GO" id="GO:0021879">
    <property type="term" value="P:forebrain neuron differentiation"/>
    <property type="evidence" value="ECO:0000270"/>
    <property type="project" value="RGD"/>
</dbReference>
<dbReference type="GO" id="GO:0043065">
    <property type="term" value="P:positive regulation of apoptotic process"/>
    <property type="evidence" value="ECO:0000314"/>
    <property type="project" value="RGD"/>
</dbReference>
<dbReference type="GO" id="GO:1904044">
    <property type="term" value="P:response to aldosterone"/>
    <property type="evidence" value="ECO:0000270"/>
    <property type="project" value="RGD"/>
</dbReference>
<dbReference type="InterPro" id="IPR001849">
    <property type="entry name" value="PH_domain"/>
</dbReference>
<dbReference type="InterPro" id="IPR042832">
    <property type="entry name" value="PHLA1/2/3"/>
</dbReference>
<dbReference type="PANTHER" id="PTHR15478:SF4">
    <property type="entry name" value="PLECKSTRIN HOMOLOGY-LIKE DOMAIN FAMILY A MEMBER 1"/>
    <property type="match status" value="1"/>
</dbReference>
<dbReference type="PANTHER" id="PTHR15478">
    <property type="entry name" value="PLECKSTRIN HOMOLOGY-LIKE DOMAIN, PQ-RICH PROTEIN"/>
    <property type="match status" value="1"/>
</dbReference>
<dbReference type="SMART" id="SM00233">
    <property type="entry name" value="PH"/>
    <property type="match status" value="1"/>
</dbReference>
<dbReference type="SUPFAM" id="SSF50729">
    <property type="entry name" value="PH domain-like"/>
    <property type="match status" value="1"/>
</dbReference>